<gene>
    <name evidence="1" type="primary">rplD</name>
    <name type="ordered locus">MS2047</name>
</gene>
<feature type="chain" id="PRO_0000242392" description="Large ribosomal subunit protein uL4">
    <location>
        <begin position="1"/>
        <end position="200"/>
    </location>
</feature>
<feature type="region of interest" description="Disordered" evidence="2">
    <location>
        <begin position="43"/>
        <end position="71"/>
    </location>
</feature>
<accession>Q65QV6</accession>
<dbReference type="EMBL" id="AE016827">
    <property type="protein sequence ID" value="AAU38654.1"/>
    <property type="molecule type" value="Genomic_DNA"/>
</dbReference>
<dbReference type="RefSeq" id="WP_011201203.1">
    <property type="nucleotide sequence ID" value="NC_006300.1"/>
</dbReference>
<dbReference type="SMR" id="Q65QV6"/>
<dbReference type="STRING" id="221988.MS2047"/>
<dbReference type="KEGG" id="msu:MS2047"/>
<dbReference type="eggNOG" id="COG0088">
    <property type="taxonomic scope" value="Bacteria"/>
</dbReference>
<dbReference type="HOGENOM" id="CLU_041575_5_2_6"/>
<dbReference type="OrthoDB" id="9803201at2"/>
<dbReference type="Proteomes" id="UP000000607">
    <property type="component" value="Chromosome"/>
</dbReference>
<dbReference type="GO" id="GO:1990904">
    <property type="term" value="C:ribonucleoprotein complex"/>
    <property type="evidence" value="ECO:0007669"/>
    <property type="project" value="UniProtKB-KW"/>
</dbReference>
<dbReference type="GO" id="GO:0005840">
    <property type="term" value="C:ribosome"/>
    <property type="evidence" value="ECO:0007669"/>
    <property type="project" value="UniProtKB-KW"/>
</dbReference>
<dbReference type="GO" id="GO:0019843">
    <property type="term" value="F:rRNA binding"/>
    <property type="evidence" value="ECO:0007669"/>
    <property type="project" value="UniProtKB-UniRule"/>
</dbReference>
<dbReference type="GO" id="GO:0003735">
    <property type="term" value="F:structural constituent of ribosome"/>
    <property type="evidence" value="ECO:0007669"/>
    <property type="project" value="InterPro"/>
</dbReference>
<dbReference type="GO" id="GO:0006412">
    <property type="term" value="P:translation"/>
    <property type="evidence" value="ECO:0007669"/>
    <property type="project" value="UniProtKB-UniRule"/>
</dbReference>
<dbReference type="FunFam" id="3.40.1370.10:FF:000001">
    <property type="entry name" value="50S ribosomal protein L4"/>
    <property type="match status" value="1"/>
</dbReference>
<dbReference type="Gene3D" id="3.40.1370.10">
    <property type="match status" value="1"/>
</dbReference>
<dbReference type="HAMAP" id="MF_01328_B">
    <property type="entry name" value="Ribosomal_uL4_B"/>
    <property type="match status" value="1"/>
</dbReference>
<dbReference type="InterPro" id="IPR002136">
    <property type="entry name" value="Ribosomal_uL4"/>
</dbReference>
<dbReference type="InterPro" id="IPR013005">
    <property type="entry name" value="Ribosomal_uL4-like"/>
</dbReference>
<dbReference type="InterPro" id="IPR023574">
    <property type="entry name" value="Ribosomal_uL4_dom_sf"/>
</dbReference>
<dbReference type="NCBIfam" id="TIGR03953">
    <property type="entry name" value="rplD_bact"/>
    <property type="match status" value="1"/>
</dbReference>
<dbReference type="PANTHER" id="PTHR10746">
    <property type="entry name" value="50S RIBOSOMAL PROTEIN L4"/>
    <property type="match status" value="1"/>
</dbReference>
<dbReference type="PANTHER" id="PTHR10746:SF6">
    <property type="entry name" value="LARGE RIBOSOMAL SUBUNIT PROTEIN UL4M"/>
    <property type="match status" value="1"/>
</dbReference>
<dbReference type="Pfam" id="PF00573">
    <property type="entry name" value="Ribosomal_L4"/>
    <property type="match status" value="1"/>
</dbReference>
<dbReference type="SUPFAM" id="SSF52166">
    <property type="entry name" value="Ribosomal protein L4"/>
    <property type="match status" value="1"/>
</dbReference>
<protein>
    <recommendedName>
        <fullName evidence="1">Large ribosomal subunit protein uL4</fullName>
    </recommendedName>
    <alternativeName>
        <fullName evidence="3">50S ribosomal protein L4</fullName>
    </alternativeName>
</protein>
<name>RL4_MANSM</name>
<proteinExistence type="inferred from homology"/>
<keyword id="KW-0687">Ribonucleoprotein</keyword>
<keyword id="KW-0689">Ribosomal protein</keyword>
<keyword id="KW-0694">RNA-binding</keyword>
<keyword id="KW-0699">rRNA-binding</keyword>
<sequence>MELQVVGANALAVSETTFGREFNEALIHQVVVAYAAGARQGSRAQKTRAEVSGSGKKPWRQKGTGRARSGDIKSPIWRSGGITFAAKPQDHSQKVNKKMYRGAIKSILSELVRQDRLVVVDKFEIDAPKTKVLVQKLKDLALEDVLIITASLDENLFLAARNLYKVDVRDVQGIDPVSLIAFNKVVVTVDAVKQIEEMLA</sequence>
<reference key="1">
    <citation type="journal article" date="2004" name="Nat. Biotechnol.">
        <title>The genome sequence of the capnophilic rumen bacterium Mannheimia succiniciproducens.</title>
        <authorList>
            <person name="Hong S.H."/>
            <person name="Kim J.S."/>
            <person name="Lee S.Y."/>
            <person name="In Y.H."/>
            <person name="Choi S.S."/>
            <person name="Rih J.-K."/>
            <person name="Kim C.H."/>
            <person name="Jeong H."/>
            <person name="Hur C.G."/>
            <person name="Kim J.J."/>
        </authorList>
    </citation>
    <scope>NUCLEOTIDE SEQUENCE [LARGE SCALE GENOMIC DNA]</scope>
    <source>
        <strain>KCTC 0769BP / MBEL55E</strain>
    </source>
</reference>
<evidence type="ECO:0000255" key="1">
    <source>
        <dbReference type="HAMAP-Rule" id="MF_01328"/>
    </source>
</evidence>
<evidence type="ECO:0000256" key="2">
    <source>
        <dbReference type="SAM" id="MobiDB-lite"/>
    </source>
</evidence>
<evidence type="ECO:0000305" key="3"/>
<comment type="function">
    <text evidence="1">One of the primary rRNA binding proteins, this protein initially binds near the 5'-end of the 23S rRNA. It is important during the early stages of 50S assembly. It makes multiple contacts with different domains of the 23S rRNA in the assembled 50S subunit and ribosome.</text>
</comment>
<comment type="function">
    <text evidence="1">Forms part of the polypeptide exit tunnel.</text>
</comment>
<comment type="subunit">
    <text evidence="1">Part of the 50S ribosomal subunit.</text>
</comment>
<comment type="similarity">
    <text evidence="1">Belongs to the universal ribosomal protein uL4 family.</text>
</comment>
<organism>
    <name type="scientific">Mannheimia succiniciproducens (strain KCTC 0769BP / MBEL55E)</name>
    <dbReference type="NCBI Taxonomy" id="221988"/>
    <lineage>
        <taxon>Bacteria</taxon>
        <taxon>Pseudomonadati</taxon>
        <taxon>Pseudomonadota</taxon>
        <taxon>Gammaproteobacteria</taxon>
        <taxon>Pasteurellales</taxon>
        <taxon>Pasteurellaceae</taxon>
        <taxon>Basfia</taxon>
    </lineage>
</organism>